<gene>
    <name type="ordered locus">sll1298</name>
</gene>
<organism>
    <name type="scientific">Synechocystis sp. (strain ATCC 27184 / PCC 6803 / Kazusa)</name>
    <dbReference type="NCBI Taxonomy" id="1111708"/>
    <lineage>
        <taxon>Bacteria</taxon>
        <taxon>Bacillati</taxon>
        <taxon>Cyanobacteriota</taxon>
        <taxon>Cyanophyceae</taxon>
        <taxon>Synechococcales</taxon>
        <taxon>Merismopediaceae</taxon>
        <taxon>Synechocystis</taxon>
    </lineage>
</organism>
<dbReference type="EC" id="3.1.1.45"/>
<dbReference type="EMBL" id="BA000022">
    <property type="protein sequence ID" value="BAA17189.1"/>
    <property type="molecule type" value="Genomic_DNA"/>
</dbReference>
<dbReference type="PIR" id="S75275">
    <property type="entry name" value="S75275"/>
</dbReference>
<dbReference type="SMR" id="P73163"/>
<dbReference type="STRING" id="1148.gene:10498052"/>
<dbReference type="ESTHER" id="syny3-dlhh">
    <property type="family name" value="Dienelactone_hydrolase"/>
</dbReference>
<dbReference type="PaxDb" id="1148-1652266"/>
<dbReference type="EnsemblBacteria" id="BAA17189">
    <property type="protein sequence ID" value="BAA17189"/>
    <property type="gene ID" value="BAA17189"/>
</dbReference>
<dbReference type="KEGG" id="syn:sll1298"/>
<dbReference type="eggNOG" id="COG0412">
    <property type="taxonomic scope" value="Bacteria"/>
</dbReference>
<dbReference type="InParanoid" id="P73163"/>
<dbReference type="PhylomeDB" id="P73163"/>
<dbReference type="Proteomes" id="UP000001425">
    <property type="component" value="Chromosome"/>
</dbReference>
<dbReference type="GO" id="GO:0008806">
    <property type="term" value="F:carboxymethylenebutenolidase activity"/>
    <property type="evidence" value="ECO:0007669"/>
    <property type="project" value="UniProtKB-EC"/>
</dbReference>
<dbReference type="Gene3D" id="3.40.50.1820">
    <property type="entry name" value="alpha/beta hydrolase"/>
    <property type="match status" value="1"/>
</dbReference>
<dbReference type="InterPro" id="IPR029058">
    <property type="entry name" value="AB_hydrolase_fold"/>
</dbReference>
<dbReference type="InterPro" id="IPR002925">
    <property type="entry name" value="Dienelactn_hydro"/>
</dbReference>
<dbReference type="InterPro" id="IPR051049">
    <property type="entry name" value="Dienelactone_hydrolase-like"/>
</dbReference>
<dbReference type="PANTHER" id="PTHR46623:SF6">
    <property type="entry name" value="ALPHA_BETA-HYDROLASES SUPERFAMILY PROTEIN"/>
    <property type="match status" value="1"/>
</dbReference>
<dbReference type="PANTHER" id="PTHR46623">
    <property type="entry name" value="CARBOXYMETHYLENEBUTENOLIDASE-RELATED"/>
    <property type="match status" value="1"/>
</dbReference>
<dbReference type="Pfam" id="PF01738">
    <property type="entry name" value="DLH"/>
    <property type="match status" value="1"/>
</dbReference>
<dbReference type="SUPFAM" id="SSF53474">
    <property type="entry name" value="alpha/beta-Hydrolases"/>
    <property type="match status" value="1"/>
</dbReference>
<keyword id="KW-0378">Hydrolase</keyword>
<keyword id="KW-1185">Reference proteome</keyword>
<sequence>MTVDIKTTLVTIPNQNLQIAGYLAEPVAVGQYPVVIVIQEIFGVNSHIRDVTERVAKEGYVAIAPAIYQRQAPGFEEGYTPEGIEAGRKLKDQTSSAEILSDLEATIAYAQTLPNVKPEEVGLIGFCFGGWIVYLGASLPTVKATASFYGAGIPHWAPGTAEPPITYTDKIQGTLYAFFGLEDTSIPMADTEQIEQALTKYQVNHKIFRYPGADHGFFCDQRASYNAEAAADAWQKVKQLFQTELK</sequence>
<proteinExistence type="inferred from homology"/>
<accession>P73163</accession>
<protein>
    <recommendedName>
        <fullName>Putative carboxymethylenebutenolidase</fullName>
        <ecNumber>3.1.1.45</ecNumber>
    </recommendedName>
    <alternativeName>
        <fullName>Dienelactone hydrolase</fullName>
        <shortName>DLH</shortName>
    </alternativeName>
</protein>
<comment type="catalytic activity">
    <reaction>
        <text>2-(5-oxo-2,5-dihydrofuran-2-ylidene)acetate + H2O = 4-oxohex-2-enedioate + H(+)</text>
        <dbReference type="Rhea" id="RHEA:12372"/>
        <dbReference type="ChEBI" id="CHEBI:12040"/>
        <dbReference type="ChEBI" id="CHEBI:15377"/>
        <dbReference type="ChEBI" id="CHEBI:15378"/>
        <dbReference type="ChEBI" id="CHEBI:57263"/>
        <dbReference type="EC" id="3.1.1.45"/>
    </reaction>
</comment>
<comment type="similarity">
    <text evidence="2">Belongs to the dienelactone hydrolase family.</text>
</comment>
<feature type="chain" id="PRO_0000161582" description="Putative carboxymethylenebutenolidase">
    <location>
        <begin position="1"/>
        <end position="246"/>
    </location>
</feature>
<feature type="active site" evidence="1">
    <location>
        <position position="127"/>
    </location>
</feature>
<feature type="active site" evidence="1">
    <location>
        <position position="183"/>
    </location>
</feature>
<feature type="active site" evidence="1">
    <location>
        <position position="215"/>
    </location>
</feature>
<name>DLHH_SYNY3</name>
<reference key="1">
    <citation type="journal article" date="1996" name="DNA Res.">
        <title>Sequence analysis of the genome of the unicellular cyanobacterium Synechocystis sp. strain PCC6803. II. Sequence determination of the entire genome and assignment of potential protein-coding regions.</title>
        <authorList>
            <person name="Kaneko T."/>
            <person name="Sato S."/>
            <person name="Kotani H."/>
            <person name="Tanaka A."/>
            <person name="Asamizu E."/>
            <person name="Nakamura Y."/>
            <person name="Miyajima N."/>
            <person name="Hirosawa M."/>
            <person name="Sugiura M."/>
            <person name="Sasamoto S."/>
            <person name="Kimura T."/>
            <person name="Hosouchi T."/>
            <person name="Matsuno A."/>
            <person name="Muraki A."/>
            <person name="Nakazaki N."/>
            <person name="Naruo K."/>
            <person name="Okumura S."/>
            <person name="Shimpo S."/>
            <person name="Takeuchi C."/>
            <person name="Wada T."/>
            <person name="Watanabe A."/>
            <person name="Yamada M."/>
            <person name="Yasuda M."/>
            <person name="Tabata S."/>
        </authorList>
    </citation>
    <scope>NUCLEOTIDE SEQUENCE [LARGE SCALE GENOMIC DNA]</scope>
    <source>
        <strain>ATCC 27184 / PCC 6803 / Kazusa</strain>
    </source>
</reference>
<evidence type="ECO:0000250" key="1"/>
<evidence type="ECO:0000305" key="2"/>